<dbReference type="EMBL" id="AB089618">
    <property type="protein sequence ID" value="BAC56956.1"/>
    <property type="molecule type" value="Genomic_DNA"/>
</dbReference>
<dbReference type="RefSeq" id="XP_054312629.1">
    <property type="nucleotide sequence ID" value="XM_054456654.1"/>
</dbReference>
<dbReference type="RefSeq" id="XP_054312630.1">
    <property type="nucleotide sequence ID" value="XM_054456655.1"/>
</dbReference>
<dbReference type="SMR" id="P0CG60"/>
<dbReference type="GeneID" id="129016883"/>
<dbReference type="GO" id="GO:0005741">
    <property type="term" value="C:mitochondrial outer membrane"/>
    <property type="evidence" value="ECO:0007669"/>
    <property type="project" value="UniProtKB-SubCell"/>
</dbReference>
<dbReference type="GO" id="GO:0005634">
    <property type="term" value="C:nucleus"/>
    <property type="evidence" value="ECO:0007669"/>
    <property type="project" value="UniProtKB-SubCell"/>
</dbReference>
<dbReference type="CDD" id="cd01803">
    <property type="entry name" value="Ubl_ubiquitin"/>
    <property type="match status" value="3"/>
</dbReference>
<dbReference type="FunFam" id="3.10.20.90:FF:000158">
    <property type="entry name" value="Polyubiquitin 5"/>
    <property type="match status" value="3"/>
</dbReference>
<dbReference type="Gene3D" id="3.10.20.90">
    <property type="entry name" value="Phosphatidylinositol 3-kinase Catalytic Subunit, Chain A, domain 1"/>
    <property type="match status" value="3"/>
</dbReference>
<dbReference type="InterPro" id="IPR000626">
    <property type="entry name" value="Ubiquitin-like_dom"/>
</dbReference>
<dbReference type="InterPro" id="IPR029071">
    <property type="entry name" value="Ubiquitin-like_domsf"/>
</dbReference>
<dbReference type="InterPro" id="IPR019954">
    <property type="entry name" value="Ubiquitin_CS"/>
</dbReference>
<dbReference type="InterPro" id="IPR019956">
    <property type="entry name" value="Ubiquitin_dom"/>
</dbReference>
<dbReference type="InterPro" id="IPR050158">
    <property type="entry name" value="Ubiquitin_ubiquitin-like"/>
</dbReference>
<dbReference type="PANTHER" id="PTHR10666">
    <property type="entry name" value="UBIQUITIN"/>
    <property type="match status" value="1"/>
</dbReference>
<dbReference type="Pfam" id="PF00240">
    <property type="entry name" value="ubiquitin"/>
    <property type="match status" value="3"/>
</dbReference>
<dbReference type="PRINTS" id="PR00348">
    <property type="entry name" value="UBIQUITIN"/>
</dbReference>
<dbReference type="SMART" id="SM00213">
    <property type="entry name" value="UBQ"/>
    <property type="match status" value="3"/>
</dbReference>
<dbReference type="SUPFAM" id="SSF54236">
    <property type="entry name" value="Ubiquitin-like"/>
    <property type="match status" value="3"/>
</dbReference>
<dbReference type="PROSITE" id="PS00299">
    <property type="entry name" value="UBIQUITIN_1"/>
    <property type="match status" value="3"/>
</dbReference>
<dbReference type="PROSITE" id="PS50053">
    <property type="entry name" value="UBIQUITIN_2"/>
    <property type="match status" value="3"/>
</dbReference>
<proteinExistence type="inferred from homology"/>
<sequence>MQIFVKTLTGKTITLEVEPSDTIENVKAKIQDKEGIPPDQQRLIFAGKQLEDGRTLSDYNIQKESTLHLVLRLRGGMQIFVKTLTGKTITLEVEPSDTIENVKAKIQDKEGIPPDQQRLIFAGKQLEDGRTLSDYNIQKESTLHLVLRLRGGMQIFVKTLTGKTITLEVEPSDTIENVKAKIQDKEGIPPDQQRLIFAGKQLEDGRTLSDYNIQKESTLHLVLRLRGGC</sequence>
<comment type="function">
    <molecule>Ubiquitin</molecule>
    <text evidence="2">Exists either covalently attached to another protein, or free (unanchored). When covalently bound, it is conjugated to target proteins via an isopeptide bond either as a monomer (monoubiquitin), a polymer linked via different Lys residues of the ubiquitin (polyubiquitin chains) or a linear polymer linked via the initiator Met of the ubiquitin (linear polyubiquitin chains). Polyubiquitin chains, when attached to a target protein, have different functions depending on the Lys residue of the ubiquitin that is linked: Lys-6-linked may be involved in DNA repair; Lys-11-linked is involved in ERAD (endoplasmic reticulum-associated degradation) and in cell-cycle regulation; Lys-29-linked is involved in proteotoxic stress response and cell cycle; Lys-33-linked is involved in kinase modification; Lys-48-linked is involved in protein degradation via the proteasome; Lys-63-linked is involved in endocytosis, DNA-damage responses as well as in signaling processes leading to activation of the transcription factor NF-kappa-B. Linear polymer chains formed via attachment by the initiator Met lead to cell signaling. Ubiquitin is usually conjugated to Lys residues of target proteins, however, in rare cases, conjugation to Cys or Ser residues has been observed. When polyubiquitin is free (unanchored-polyubiquitin), it also has distinct roles, such as in activation of protein kinases, and in signaling.</text>
</comment>
<comment type="subunit">
    <text evidence="2">Interacts with SKP1-KMD2A and SKP1-KMD2B complexes.</text>
</comment>
<comment type="subcellular location">
    <molecule>Ubiquitin</molecule>
    <subcellularLocation>
        <location evidence="1">Cytoplasm</location>
    </subcellularLocation>
    <subcellularLocation>
        <location evidence="1">Nucleus</location>
    </subcellularLocation>
    <subcellularLocation>
        <location evidence="2">Mitochondrion outer membrane</location>
        <topology evidence="2">Peripheral membrane protein</topology>
    </subcellularLocation>
</comment>
<comment type="PTM">
    <molecule>Ubiquitin</molecule>
    <text evidence="2">Phosphorylated at Ser-65 by PINK1 during mitophagy. Phosphorylated ubiquitin specifically binds and activates parkin (PRKN), triggering mitophagy. Phosphorylation does not affect E1-mediated E2 charging of ubiquitin but affects discharging of E2 enzymes to form polyubiquitin chains. It also affects deubiquitination by deubiquitinase enzymes such as USP30.</text>
</comment>
<comment type="miscellaneous">
    <text>Ubiquitin is encoded by 4 different genes. Uba52 and Rps27a genes code for a single copy of ubiquitin fused to the ribosomal proteins eL40 and eS31, respectively. UBB and UBC genes code for a polyubiquitin precursor with exact head to tail repeats, the number of repeats differ between species and strains.</text>
</comment>
<comment type="miscellaneous">
    <text>For the sake of clarity sequence features are annotated only for the first chain, and are not repeated for each of the following chains.</text>
</comment>
<comment type="similarity">
    <text evidence="4">Belongs to the ubiquitin family.</text>
</comment>
<organism>
    <name type="scientific">Pongo pygmaeus</name>
    <name type="common">Bornean orangutan</name>
    <dbReference type="NCBI Taxonomy" id="9600"/>
    <lineage>
        <taxon>Eukaryota</taxon>
        <taxon>Metazoa</taxon>
        <taxon>Chordata</taxon>
        <taxon>Craniata</taxon>
        <taxon>Vertebrata</taxon>
        <taxon>Euteleostomi</taxon>
        <taxon>Mammalia</taxon>
        <taxon>Eutheria</taxon>
        <taxon>Euarchontoglires</taxon>
        <taxon>Primates</taxon>
        <taxon>Haplorrhini</taxon>
        <taxon>Catarrhini</taxon>
        <taxon>Hominidae</taxon>
        <taxon>Pongo</taxon>
    </lineage>
</organism>
<accession>P0CG60</accession>
<accession>Q5RF62</accession>
<accession>Q867C4</accession>
<accession>Q867C5</accession>
<protein>
    <recommendedName>
        <fullName>Polyubiquitin-B</fullName>
    </recommendedName>
    <component>
        <recommendedName>
            <fullName>Ubiquitin</fullName>
        </recommendedName>
    </component>
</protein>
<gene>
    <name type="primary">UBB</name>
</gene>
<reference key="1">
    <citation type="journal article" date="2003" name="J. Mol. Evol.">
        <title>Lineage-specific homogenization of the polyubiquitin gene among human and great apes.</title>
        <authorList>
            <person name="Tachikui H."/>
            <person name="Saitou N."/>
            <person name="Nakajima T."/>
            <person name="Hayasaka I."/>
            <person name="Ishida T."/>
            <person name="Inoue I."/>
        </authorList>
    </citation>
    <scope>NUCLEOTIDE SEQUENCE [GENOMIC DNA]</scope>
</reference>
<evidence type="ECO:0000250" key="1"/>
<evidence type="ECO:0000250" key="2">
    <source>
        <dbReference type="UniProtKB" id="P0CG47"/>
    </source>
</evidence>
<evidence type="ECO:0000255" key="3">
    <source>
        <dbReference type="PROSITE-ProRule" id="PRU00214"/>
    </source>
</evidence>
<evidence type="ECO:0000305" key="4"/>
<name>UBB_PONPY</name>
<keyword id="KW-0013">ADP-ribosylation</keyword>
<keyword id="KW-0963">Cytoplasm</keyword>
<keyword id="KW-1017">Isopeptide bond</keyword>
<keyword id="KW-0472">Membrane</keyword>
<keyword id="KW-0496">Mitochondrion</keyword>
<keyword id="KW-1000">Mitochondrion outer membrane</keyword>
<keyword id="KW-0539">Nucleus</keyword>
<keyword id="KW-0597">Phosphoprotein</keyword>
<keyword id="KW-0677">Repeat</keyword>
<keyword id="KW-0832">Ubl conjugation</keyword>
<feature type="chain" id="PRO_0000114804" description="Ubiquitin">
    <location>
        <begin position="1"/>
        <end position="76"/>
    </location>
</feature>
<feature type="chain" id="PRO_0000396224" description="Ubiquitin">
    <location>
        <begin position="77"/>
        <end position="152"/>
    </location>
</feature>
<feature type="chain" id="PRO_0000396225" description="Ubiquitin">
    <location>
        <begin position="153"/>
        <end position="228"/>
    </location>
</feature>
<feature type="propeptide" id="PRO_0000396226">
    <location>
        <position position="229"/>
    </location>
</feature>
<feature type="domain" description="Ubiquitin-like 1" evidence="3">
    <location>
        <begin position="1"/>
        <end position="76"/>
    </location>
</feature>
<feature type="domain" description="Ubiquitin-like 2" evidence="3">
    <location>
        <begin position="77"/>
        <end position="152"/>
    </location>
</feature>
<feature type="domain" description="Ubiquitin-like 3" evidence="3">
    <location>
        <begin position="153"/>
        <end position="228"/>
    </location>
</feature>
<feature type="site" description="Interacts with activating enzyme">
    <location>
        <position position="54"/>
    </location>
</feature>
<feature type="site" description="Essential for function">
    <location>
        <position position="68"/>
    </location>
</feature>
<feature type="site" description="Interacts with activating enzyme">
    <location>
        <position position="72"/>
    </location>
</feature>
<feature type="modified residue" description="Phosphoserine; by PINK1" evidence="2">
    <location>
        <position position="65"/>
    </location>
</feature>
<feature type="modified residue" description="ADP-ribosylglycine" evidence="2">
    <location>
        <position position="76"/>
    </location>
</feature>
<feature type="cross-link" description="Glycyl lysine isopeptide (Lys-Gly) (interchain with G-Cter in ubiquitin)" evidence="2">
    <location>
        <position position="6"/>
    </location>
</feature>
<feature type="cross-link" description="Glycyl lysine isopeptide (Lys-Gly) (interchain with G-Cter in ubiquitin)" evidence="2">
    <location>
        <position position="11"/>
    </location>
</feature>
<feature type="cross-link" description="Glycyl lysine isopeptide (Lys-Gly) (interchain with G-Cter in ubiquitin)" evidence="2">
    <location>
        <position position="27"/>
    </location>
</feature>
<feature type="cross-link" description="Glycyl lysine isopeptide (Lys-Gly) (interchain with G-Cter in ubiquitin)" evidence="2">
    <location>
        <position position="29"/>
    </location>
</feature>
<feature type="cross-link" description="Glycyl lysine isopeptide (Lys-Gly) (interchain with G-Cter in ubiquitin)" evidence="2">
    <location>
        <position position="33"/>
    </location>
</feature>
<feature type="cross-link" description="Glycyl lysine isopeptide (Lys-Gly) (interchain with G-Cter in ubiquitin)" evidence="2">
    <location>
        <position position="48"/>
    </location>
</feature>
<feature type="cross-link" description="Glycyl lysine isopeptide (Lys-Gly) (interchain with G-Cter in ubiquitin)" evidence="2">
    <location>
        <position position="63"/>
    </location>
</feature>
<feature type="cross-link" description="Glycyl lysine isopeptide (Gly-Lys) (interchain with K-? in acceptor proteins)" evidence="3">
    <location>
        <position position="76"/>
    </location>
</feature>